<comment type="function">
    <text evidence="1">The glycine cleavage system catalyzes the degradation of glycine. The H protein shuttles the methylamine group of glycine from the P protein to the T protein.</text>
</comment>
<comment type="cofactor">
    <cofactor evidence="1">
        <name>(R)-lipoate</name>
        <dbReference type="ChEBI" id="CHEBI:83088"/>
    </cofactor>
    <text evidence="1">Binds 1 lipoyl cofactor covalently.</text>
</comment>
<comment type="subunit">
    <text evidence="1">The glycine cleavage system is composed of four proteins: P, T, L and H.</text>
</comment>
<comment type="similarity">
    <text evidence="1">Belongs to the GcvH family.</text>
</comment>
<accession>Q8ZHI7</accession>
<accession>Q0WID4</accession>
<dbReference type="EMBL" id="AL590842">
    <property type="protein sequence ID" value="CAL19573.1"/>
    <property type="molecule type" value="Genomic_DNA"/>
</dbReference>
<dbReference type="EMBL" id="AE009952">
    <property type="protein sequence ID" value="AAM86843.1"/>
    <property type="molecule type" value="Genomic_DNA"/>
</dbReference>
<dbReference type="EMBL" id="AE017042">
    <property type="protein sequence ID" value="AAS63753.1"/>
    <property type="molecule type" value="Genomic_DNA"/>
</dbReference>
<dbReference type="PIR" id="AC0111">
    <property type="entry name" value="AC0111"/>
</dbReference>
<dbReference type="RefSeq" id="WP_002209948.1">
    <property type="nucleotide sequence ID" value="NZ_WUCM01000038.1"/>
</dbReference>
<dbReference type="RefSeq" id="YP_002345954.1">
    <property type="nucleotide sequence ID" value="NC_003143.1"/>
</dbReference>
<dbReference type="SMR" id="Q8ZHI7"/>
<dbReference type="STRING" id="214092.YPO0906"/>
<dbReference type="PaxDb" id="214092-YPO0906"/>
<dbReference type="DNASU" id="1148240"/>
<dbReference type="EnsemblBacteria" id="AAS63753">
    <property type="protein sequence ID" value="AAS63753"/>
    <property type="gene ID" value="YP_3603"/>
</dbReference>
<dbReference type="GeneID" id="57973734"/>
<dbReference type="KEGG" id="ype:YPO0906"/>
<dbReference type="KEGG" id="ypk:y3293"/>
<dbReference type="KEGG" id="ypm:YP_3603"/>
<dbReference type="PATRIC" id="fig|214092.21.peg.1180"/>
<dbReference type="eggNOG" id="COG0509">
    <property type="taxonomic scope" value="Bacteria"/>
</dbReference>
<dbReference type="HOGENOM" id="CLU_097408_2_0_6"/>
<dbReference type="OMA" id="KEHEWIR"/>
<dbReference type="OrthoDB" id="9796712at2"/>
<dbReference type="Proteomes" id="UP000000815">
    <property type="component" value="Chromosome"/>
</dbReference>
<dbReference type="Proteomes" id="UP000001019">
    <property type="component" value="Chromosome"/>
</dbReference>
<dbReference type="Proteomes" id="UP000002490">
    <property type="component" value="Chromosome"/>
</dbReference>
<dbReference type="GO" id="GO:0005829">
    <property type="term" value="C:cytosol"/>
    <property type="evidence" value="ECO:0000318"/>
    <property type="project" value="GO_Central"/>
</dbReference>
<dbReference type="GO" id="GO:0005960">
    <property type="term" value="C:glycine cleavage complex"/>
    <property type="evidence" value="ECO:0007669"/>
    <property type="project" value="InterPro"/>
</dbReference>
<dbReference type="GO" id="GO:0019464">
    <property type="term" value="P:glycine decarboxylation via glycine cleavage system"/>
    <property type="evidence" value="ECO:0007669"/>
    <property type="project" value="UniProtKB-UniRule"/>
</dbReference>
<dbReference type="CDD" id="cd06848">
    <property type="entry name" value="GCS_H"/>
    <property type="match status" value="1"/>
</dbReference>
<dbReference type="FunFam" id="2.40.50.100:FF:000011">
    <property type="entry name" value="Glycine cleavage system H protein"/>
    <property type="match status" value="1"/>
</dbReference>
<dbReference type="Gene3D" id="2.40.50.100">
    <property type="match status" value="1"/>
</dbReference>
<dbReference type="HAMAP" id="MF_00272">
    <property type="entry name" value="GcvH"/>
    <property type="match status" value="1"/>
</dbReference>
<dbReference type="InterPro" id="IPR003016">
    <property type="entry name" value="2-oxoA_DH_lipoyl-BS"/>
</dbReference>
<dbReference type="InterPro" id="IPR000089">
    <property type="entry name" value="Biotin_lipoyl"/>
</dbReference>
<dbReference type="InterPro" id="IPR002930">
    <property type="entry name" value="GCV_H"/>
</dbReference>
<dbReference type="InterPro" id="IPR033753">
    <property type="entry name" value="GCV_H/Fam206"/>
</dbReference>
<dbReference type="InterPro" id="IPR017453">
    <property type="entry name" value="GCV_H_sub"/>
</dbReference>
<dbReference type="InterPro" id="IPR011053">
    <property type="entry name" value="Single_hybrid_motif"/>
</dbReference>
<dbReference type="NCBIfam" id="TIGR00527">
    <property type="entry name" value="gcvH"/>
    <property type="match status" value="1"/>
</dbReference>
<dbReference type="NCBIfam" id="NF002270">
    <property type="entry name" value="PRK01202.1"/>
    <property type="match status" value="1"/>
</dbReference>
<dbReference type="PANTHER" id="PTHR11715">
    <property type="entry name" value="GLYCINE CLEAVAGE SYSTEM H PROTEIN"/>
    <property type="match status" value="1"/>
</dbReference>
<dbReference type="PANTHER" id="PTHR11715:SF3">
    <property type="entry name" value="GLYCINE CLEAVAGE SYSTEM H PROTEIN-RELATED"/>
    <property type="match status" value="1"/>
</dbReference>
<dbReference type="Pfam" id="PF01597">
    <property type="entry name" value="GCV_H"/>
    <property type="match status" value="1"/>
</dbReference>
<dbReference type="SUPFAM" id="SSF51230">
    <property type="entry name" value="Single hybrid motif"/>
    <property type="match status" value="1"/>
</dbReference>
<dbReference type="PROSITE" id="PS50968">
    <property type="entry name" value="BIOTINYL_LIPOYL"/>
    <property type="match status" value="1"/>
</dbReference>
<dbReference type="PROSITE" id="PS00189">
    <property type="entry name" value="LIPOYL"/>
    <property type="match status" value="1"/>
</dbReference>
<protein>
    <recommendedName>
        <fullName evidence="1">Glycine cleavage system H protein</fullName>
    </recommendedName>
</protein>
<gene>
    <name evidence="1" type="primary">gcvH</name>
    <name type="synonym">gcsH</name>
    <name type="ordered locus">YPO0906</name>
    <name type="ordered locus">y3293</name>
    <name type="ordered locus">YP_3603</name>
</gene>
<keyword id="KW-0450">Lipoyl</keyword>
<keyword id="KW-1185">Reference proteome</keyword>
<evidence type="ECO:0000255" key="1">
    <source>
        <dbReference type="HAMAP-Rule" id="MF_00272"/>
    </source>
</evidence>
<evidence type="ECO:0000255" key="2">
    <source>
        <dbReference type="PROSITE-ProRule" id="PRU01066"/>
    </source>
</evidence>
<feature type="chain" id="PRO_0000166271" description="Glycine cleavage system H protein">
    <location>
        <begin position="1"/>
        <end position="128"/>
    </location>
</feature>
<feature type="domain" description="Lipoyl-binding" evidence="2">
    <location>
        <begin position="24"/>
        <end position="106"/>
    </location>
</feature>
<feature type="modified residue" description="N6-lipoyllysine" evidence="1">
    <location>
        <position position="65"/>
    </location>
</feature>
<sequence length="128" mass="13581">MSNVPTELKYALSHEWVRADGDGVYSVGITEHAQELLGDMVFVDLPEVGSDVSAGSDCAVAESVKAASDIYAPISGEIVAVNTELENSPELVNSAPYTDGWLFSIKAADESELDNLLDADAYLAAIEE</sequence>
<name>GCSH_YERPE</name>
<organism>
    <name type="scientific">Yersinia pestis</name>
    <dbReference type="NCBI Taxonomy" id="632"/>
    <lineage>
        <taxon>Bacteria</taxon>
        <taxon>Pseudomonadati</taxon>
        <taxon>Pseudomonadota</taxon>
        <taxon>Gammaproteobacteria</taxon>
        <taxon>Enterobacterales</taxon>
        <taxon>Yersiniaceae</taxon>
        <taxon>Yersinia</taxon>
    </lineage>
</organism>
<proteinExistence type="inferred from homology"/>
<reference key="1">
    <citation type="journal article" date="2001" name="Nature">
        <title>Genome sequence of Yersinia pestis, the causative agent of plague.</title>
        <authorList>
            <person name="Parkhill J."/>
            <person name="Wren B.W."/>
            <person name="Thomson N.R."/>
            <person name="Titball R.W."/>
            <person name="Holden M.T.G."/>
            <person name="Prentice M.B."/>
            <person name="Sebaihia M."/>
            <person name="James K.D."/>
            <person name="Churcher C.M."/>
            <person name="Mungall K.L."/>
            <person name="Baker S."/>
            <person name="Basham D."/>
            <person name="Bentley S.D."/>
            <person name="Brooks K."/>
            <person name="Cerdeno-Tarraga A.-M."/>
            <person name="Chillingworth T."/>
            <person name="Cronin A."/>
            <person name="Davies R.M."/>
            <person name="Davis P."/>
            <person name="Dougan G."/>
            <person name="Feltwell T."/>
            <person name="Hamlin N."/>
            <person name="Holroyd S."/>
            <person name="Jagels K."/>
            <person name="Karlyshev A.V."/>
            <person name="Leather S."/>
            <person name="Moule S."/>
            <person name="Oyston P.C.F."/>
            <person name="Quail M.A."/>
            <person name="Rutherford K.M."/>
            <person name="Simmonds M."/>
            <person name="Skelton J."/>
            <person name="Stevens K."/>
            <person name="Whitehead S."/>
            <person name="Barrell B.G."/>
        </authorList>
    </citation>
    <scope>NUCLEOTIDE SEQUENCE [LARGE SCALE GENOMIC DNA]</scope>
    <source>
        <strain>CO-92 / Biovar Orientalis</strain>
    </source>
</reference>
<reference key="2">
    <citation type="journal article" date="2002" name="J. Bacteriol.">
        <title>Genome sequence of Yersinia pestis KIM.</title>
        <authorList>
            <person name="Deng W."/>
            <person name="Burland V."/>
            <person name="Plunkett G. III"/>
            <person name="Boutin A."/>
            <person name="Mayhew G.F."/>
            <person name="Liss P."/>
            <person name="Perna N.T."/>
            <person name="Rose D.J."/>
            <person name="Mau B."/>
            <person name="Zhou S."/>
            <person name="Schwartz D.C."/>
            <person name="Fetherston J.D."/>
            <person name="Lindler L.E."/>
            <person name="Brubaker R.R."/>
            <person name="Plano G.V."/>
            <person name="Straley S.C."/>
            <person name="McDonough K.A."/>
            <person name="Nilles M.L."/>
            <person name="Matson J.S."/>
            <person name="Blattner F.R."/>
            <person name="Perry R.D."/>
        </authorList>
    </citation>
    <scope>NUCLEOTIDE SEQUENCE [LARGE SCALE GENOMIC DNA]</scope>
    <source>
        <strain>KIM10+ / Biovar Mediaevalis</strain>
    </source>
</reference>
<reference key="3">
    <citation type="journal article" date="2004" name="DNA Res.">
        <title>Complete genome sequence of Yersinia pestis strain 91001, an isolate avirulent to humans.</title>
        <authorList>
            <person name="Song Y."/>
            <person name="Tong Z."/>
            <person name="Wang J."/>
            <person name="Wang L."/>
            <person name="Guo Z."/>
            <person name="Han Y."/>
            <person name="Zhang J."/>
            <person name="Pei D."/>
            <person name="Zhou D."/>
            <person name="Qin H."/>
            <person name="Pang X."/>
            <person name="Han Y."/>
            <person name="Zhai J."/>
            <person name="Li M."/>
            <person name="Cui B."/>
            <person name="Qi Z."/>
            <person name="Jin L."/>
            <person name="Dai R."/>
            <person name="Chen F."/>
            <person name="Li S."/>
            <person name="Ye C."/>
            <person name="Du Z."/>
            <person name="Lin W."/>
            <person name="Wang J."/>
            <person name="Yu J."/>
            <person name="Yang H."/>
            <person name="Wang J."/>
            <person name="Huang P."/>
            <person name="Yang R."/>
        </authorList>
    </citation>
    <scope>NUCLEOTIDE SEQUENCE [LARGE SCALE GENOMIC DNA]</scope>
    <source>
        <strain>91001 / Biovar Mediaevalis</strain>
    </source>
</reference>